<sequence>MSGQKLTAANLVSAIDSLKKNVNYNYVNSSNTHTIQIVHVEKPEGPIKIKRGDTETSISKQAIWRLADALSTGEPVNVDRVFGASYNFRSALEALLAHTPEIYWCKLQRIQPGLNKSEVVEGHKHIIWLPDRPHEKGVMKEYETDVVISEIPSNNVVYDALSLPSTHSEIDIDVKRRHVQIQIALSAIGFQLGFRTWIARNDQGISYGDKKIADLDGIVQKIESEKLISSFDGAVQAAMNIDCIWFRNGKLMPAVMEVEHSTGVRSGLARMKQLKDLLPPYANTRWVIVAPDEDRDKVFKEANVPMFKNLDTQYFPYSAVEELYSLCIRRKLTNKAVNEEFLDCFMEKCVM</sequence>
<proteinExistence type="predicted"/>
<feature type="chain" id="PRO_0000077351" description="Type II restriction enzyme NmeDI">
    <location>
        <begin position="1"/>
        <end position="351"/>
    </location>
</feature>
<dbReference type="EC" id="3.1.21.4"/>
<dbReference type="EMBL" id="AJ238948">
    <property type="protein sequence ID" value="CAB59898.1"/>
    <property type="molecule type" value="Genomic_DNA"/>
</dbReference>
<dbReference type="REBASE" id="4187">
    <property type="entry name" value="NmeDI"/>
</dbReference>
<dbReference type="BRENDA" id="3.1.21.4">
    <property type="organism ID" value="3593"/>
</dbReference>
<dbReference type="PRO" id="PR:Q9RLM3"/>
<dbReference type="GO" id="GO:0009036">
    <property type="term" value="F:type II site-specific deoxyribonuclease activity"/>
    <property type="evidence" value="ECO:0007669"/>
    <property type="project" value="UniProtKB-EC"/>
</dbReference>
<dbReference type="GO" id="GO:0009307">
    <property type="term" value="P:DNA restriction-modification system"/>
    <property type="evidence" value="ECO:0007669"/>
    <property type="project" value="UniProtKB-KW"/>
</dbReference>
<accession>Q9RLM3</accession>
<protein>
    <recommendedName>
        <fullName evidence="1">Type II restriction enzyme NmeDI</fullName>
        <shortName>R.NmeDI</shortName>
        <ecNumber>3.1.21.4</ecNumber>
    </recommendedName>
    <alternativeName>
        <fullName>Endonuclease NmeDI</fullName>
    </alternativeName>
    <alternativeName>
        <fullName>Type-2 restriction enzyme NmeDI</fullName>
    </alternativeName>
</protein>
<name>T2D1_NEIMC</name>
<reference key="1">
    <citation type="journal article" date="2000" name="J. Bacteriol.">
        <title>Differential distribution of novel restriction-modification systems in clonal lineages of Neisseria meningitidis.</title>
        <authorList>
            <person name="Claus H."/>
            <person name="Friedrich A."/>
            <person name="Frosch M."/>
            <person name="Vogel U."/>
        </authorList>
    </citation>
    <scope>NUCLEOTIDE SEQUENCE [GENOMIC DNA]</scope>
    <source>
        <strain>2120 / Serogroup C / Serotype NT</strain>
    </source>
</reference>
<reference key="2">
    <citation type="journal article" date="2003" name="Nucleic Acids Res.">
        <title>A nomenclature for restriction enzymes, DNA methyltransferases, homing endonucleases and their genes.</title>
        <authorList>
            <person name="Roberts R.J."/>
            <person name="Belfort M."/>
            <person name="Bestor T."/>
            <person name="Bhagwat A.S."/>
            <person name="Bickle T.A."/>
            <person name="Bitinaite J."/>
            <person name="Blumenthal R.M."/>
            <person name="Degtyarev S.K."/>
            <person name="Dryden D.T."/>
            <person name="Dybvig K."/>
            <person name="Firman K."/>
            <person name="Gromova E.S."/>
            <person name="Gumport R.I."/>
            <person name="Halford S.E."/>
            <person name="Hattman S."/>
            <person name="Heitman J."/>
            <person name="Hornby D.P."/>
            <person name="Janulaitis A."/>
            <person name="Jeltsch A."/>
            <person name="Josephsen J."/>
            <person name="Kiss A."/>
            <person name="Klaenhammer T.R."/>
            <person name="Kobayashi I."/>
            <person name="Kong H."/>
            <person name="Krueger D.H."/>
            <person name="Lacks S."/>
            <person name="Marinus M.G."/>
            <person name="Miyahara M."/>
            <person name="Morgan R.D."/>
            <person name="Murray N.E."/>
            <person name="Nagaraja V."/>
            <person name="Piekarowicz A."/>
            <person name="Pingoud A."/>
            <person name="Raleigh E."/>
            <person name="Rao D.N."/>
            <person name="Reich N."/>
            <person name="Repin V.E."/>
            <person name="Selker E.U."/>
            <person name="Shaw P.C."/>
            <person name="Stein D.C."/>
            <person name="Stoddard B.L."/>
            <person name="Szybalski W."/>
            <person name="Trautner T.A."/>
            <person name="Van Etten J.L."/>
            <person name="Vitor J.M."/>
            <person name="Wilson G.G."/>
            <person name="Xu S.Y."/>
        </authorList>
    </citation>
    <scope>NOMENCLATURE</scope>
    <scope>SUBTYPE</scope>
</reference>
<comment type="function">
    <text evidence="1">A P subtype restriction enzyme that recognizes the double-stranded sequence 5'-N(12)RCCGGYN(12)-3' and cleaves on both sides of the recognition sequence.</text>
</comment>
<comment type="catalytic activity">
    <reaction>
        <text>Endonucleolytic cleavage of DNA to give specific double-stranded fragments with terminal 5'-phosphates.</text>
        <dbReference type="EC" id="3.1.21.4"/>
    </reaction>
</comment>
<evidence type="ECO:0000303" key="1">
    <source>
    </source>
</evidence>
<keyword id="KW-0255">Endonuclease</keyword>
<keyword id="KW-0378">Hydrolase</keyword>
<keyword id="KW-0540">Nuclease</keyword>
<keyword id="KW-0680">Restriction system</keyword>
<gene>
    <name type="primary">nmeDIRP</name>
</gene>
<organism>
    <name type="scientific">Neisseria meningitidis serogroup C</name>
    <dbReference type="NCBI Taxonomy" id="135720"/>
    <lineage>
        <taxon>Bacteria</taxon>
        <taxon>Pseudomonadati</taxon>
        <taxon>Pseudomonadota</taxon>
        <taxon>Betaproteobacteria</taxon>
        <taxon>Neisseriales</taxon>
        <taxon>Neisseriaceae</taxon>
        <taxon>Neisseria</taxon>
    </lineage>
</organism>